<protein>
    <recommendedName>
        <fullName>Sorting nexin-33</fullName>
    </recommendedName>
    <alternativeName>
        <fullName>SH3 and PX domain-containing protein 3</fullName>
    </alternativeName>
</protein>
<proteinExistence type="evidence at transcript level"/>
<feature type="chain" id="PRO_0000311950" description="Sorting nexin-33">
    <location>
        <begin position="1"/>
        <end position="550"/>
    </location>
</feature>
<feature type="domain" description="SH3" evidence="3">
    <location>
        <begin position="1"/>
        <end position="61"/>
    </location>
</feature>
<feature type="domain" description="PX" evidence="2">
    <location>
        <begin position="206"/>
        <end position="316"/>
    </location>
</feature>
<feature type="domain" description="BAR">
    <location>
        <begin position="347"/>
        <end position="550"/>
    </location>
</feature>
<feature type="region of interest" description="Disordered" evidence="4">
    <location>
        <begin position="62"/>
        <end position="152"/>
    </location>
</feature>
<feature type="compositionally biased region" description="Acidic residues" evidence="4">
    <location>
        <begin position="86"/>
        <end position="102"/>
    </location>
</feature>
<feature type="compositionally biased region" description="Basic and acidic residues" evidence="4">
    <location>
        <begin position="128"/>
        <end position="144"/>
    </location>
</feature>
<dbReference type="EMBL" id="BC070737">
    <property type="protein sequence ID" value="AAH70737.1"/>
    <property type="molecule type" value="mRNA"/>
</dbReference>
<dbReference type="RefSeq" id="NP_001084772.1">
    <property type="nucleotide sequence ID" value="NM_001091303.1"/>
</dbReference>
<dbReference type="RefSeq" id="XP_018109698.1">
    <property type="nucleotide sequence ID" value="XM_018254209.1"/>
</dbReference>
<dbReference type="RefSeq" id="XP_018109699.1">
    <property type="nucleotide sequence ID" value="XM_018254210.1"/>
</dbReference>
<dbReference type="SMR" id="Q6NRL2"/>
<dbReference type="DNASU" id="431808"/>
<dbReference type="GeneID" id="431808"/>
<dbReference type="KEGG" id="xla:431808"/>
<dbReference type="AGR" id="Xenbase:XB-GENE-955371"/>
<dbReference type="CTD" id="431808"/>
<dbReference type="Xenbase" id="XB-GENE-955371">
    <property type="gene designation" value="snx33.S"/>
</dbReference>
<dbReference type="OMA" id="TENRIIC"/>
<dbReference type="OrthoDB" id="10254720at2759"/>
<dbReference type="Proteomes" id="UP000186698">
    <property type="component" value="Chromosome 3S"/>
</dbReference>
<dbReference type="Bgee" id="431808">
    <property type="expression patterns" value="Expressed in ovary and 19 other cell types or tissues"/>
</dbReference>
<dbReference type="GO" id="GO:0031410">
    <property type="term" value="C:cytoplasmic vesicle"/>
    <property type="evidence" value="ECO:0000250"/>
    <property type="project" value="UniProtKB"/>
</dbReference>
<dbReference type="GO" id="GO:0030659">
    <property type="term" value="C:cytoplasmic vesicle membrane"/>
    <property type="evidence" value="ECO:0007669"/>
    <property type="project" value="UniProtKB-SubCell"/>
</dbReference>
<dbReference type="GO" id="GO:0005829">
    <property type="term" value="C:cytosol"/>
    <property type="evidence" value="ECO:0007669"/>
    <property type="project" value="UniProtKB-SubCell"/>
</dbReference>
<dbReference type="GO" id="GO:0005886">
    <property type="term" value="C:plasma membrane"/>
    <property type="evidence" value="ECO:0000318"/>
    <property type="project" value="GO_Central"/>
</dbReference>
<dbReference type="GO" id="GO:0035091">
    <property type="term" value="F:phosphatidylinositol binding"/>
    <property type="evidence" value="ECO:0000318"/>
    <property type="project" value="GO_Central"/>
</dbReference>
<dbReference type="GO" id="GO:0036089">
    <property type="term" value="P:cleavage furrow formation"/>
    <property type="evidence" value="ECO:0000250"/>
    <property type="project" value="UniProtKB"/>
</dbReference>
<dbReference type="GO" id="GO:0006897">
    <property type="term" value="P:endocytosis"/>
    <property type="evidence" value="ECO:0000250"/>
    <property type="project" value="UniProtKB"/>
</dbReference>
<dbReference type="GO" id="GO:0016197">
    <property type="term" value="P:endosomal transport"/>
    <property type="evidence" value="ECO:0000250"/>
    <property type="project" value="UniProtKB"/>
</dbReference>
<dbReference type="GO" id="GO:0007032">
    <property type="term" value="P:endosome organization"/>
    <property type="evidence" value="ECO:0000250"/>
    <property type="project" value="UniProtKB"/>
</dbReference>
<dbReference type="GO" id="GO:0006886">
    <property type="term" value="P:intracellular protein transport"/>
    <property type="evidence" value="ECO:0007669"/>
    <property type="project" value="InterPro"/>
</dbReference>
<dbReference type="GO" id="GO:0044351">
    <property type="term" value="P:macropinocytosis"/>
    <property type="evidence" value="ECO:0000250"/>
    <property type="project" value="UniProtKB"/>
</dbReference>
<dbReference type="GO" id="GO:0000281">
    <property type="term" value="P:mitotic cytokinesis"/>
    <property type="evidence" value="ECO:0000250"/>
    <property type="project" value="UniProtKB"/>
</dbReference>
<dbReference type="GO" id="GO:0097320">
    <property type="term" value="P:plasma membrane tubulation"/>
    <property type="evidence" value="ECO:0000250"/>
    <property type="project" value="UniProtKB"/>
</dbReference>
<dbReference type="CDD" id="cd07669">
    <property type="entry name" value="BAR_SNX33"/>
    <property type="match status" value="1"/>
</dbReference>
<dbReference type="CDD" id="cd11896">
    <property type="entry name" value="SH3_SNX33"/>
    <property type="match status" value="1"/>
</dbReference>
<dbReference type="FunFam" id="1.20.1270.60:FF:000033">
    <property type="entry name" value="Sorting nexin"/>
    <property type="match status" value="1"/>
</dbReference>
<dbReference type="FunFam" id="2.30.30.40:FF:000116">
    <property type="entry name" value="Sorting nexin"/>
    <property type="match status" value="1"/>
</dbReference>
<dbReference type="FunFam" id="3.30.1520.10:FF:000004">
    <property type="entry name" value="Sorting nexin"/>
    <property type="match status" value="1"/>
</dbReference>
<dbReference type="Gene3D" id="1.20.1270.60">
    <property type="entry name" value="Arfaptin homology (AH) domain/BAR domain"/>
    <property type="match status" value="1"/>
</dbReference>
<dbReference type="Gene3D" id="3.30.1520.10">
    <property type="entry name" value="Phox-like domain"/>
    <property type="match status" value="1"/>
</dbReference>
<dbReference type="Gene3D" id="2.30.30.40">
    <property type="entry name" value="SH3 Domains"/>
    <property type="match status" value="1"/>
</dbReference>
<dbReference type="InterPro" id="IPR027267">
    <property type="entry name" value="AH/BAR_dom_sf"/>
</dbReference>
<dbReference type="InterPro" id="IPR001683">
    <property type="entry name" value="PX_dom"/>
</dbReference>
<dbReference type="InterPro" id="IPR036871">
    <property type="entry name" value="PX_dom_sf"/>
</dbReference>
<dbReference type="InterPro" id="IPR036028">
    <property type="entry name" value="SH3-like_dom_sf"/>
</dbReference>
<dbReference type="InterPro" id="IPR001452">
    <property type="entry name" value="SH3_domain"/>
</dbReference>
<dbReference type="InterPro" id="IPR037427">
    <property type="entry name" value="SNX33_BAR"/>
</dbReference>
<dbReference type="InterPro" id="IPR014536">
    <property type="entry name" value="Snx9_fam"/>
</dbReference>
<dbReference type="InterPro" id="IPR019497">
    <property type="entry name" value="Sorting_nexin_WASP-bd-dom"/>
</dbReference>
<dbReference type="PANTHER" id="PTHR45827">
    <property type="entry name" value="SORTING NEXIN"/>
    <property type="match status" value="1"/>
</dbReference>
<dbReference type="PANTHER" id="PTHR45827:SF3">
    <property type="entry name" value="SORTING NEXIN-33"/>
    <property type="match status" value="1"/>
</dbReference>
<dbReference type="Pfam" id="PF10456">
    <property type="entry name" value="BAR_3_WASP_bdg"/>
    <property type="match status" value="1"/>
</dbReference>
<dbReference type="Pfam" id="PF00787">
    <property type="entry name" value="PX"/>
    <property type="match status" value="1"/>
</dbReference>
<dbReference type="Pfam" id="PF14604">
    <property type="entry name" value="SH3_9"/>
    <property type="match status" value="1"/>
</dbReference>
<dbReference type="PIRSF" id="PIRSF027744">
    <property type="entry name" value="Snx9"/>
    <property type="match status" value="1"/>
</dbReference>
<dbReference type="SMART" id="SM00312">
    <property type="entry name" value="PX"/>
    <property type="match status" value="1"/>
</dbReference>
<dbReference type="SMART" id="SM00326">
    <property type="entry name" value="SH3"/>
    <property type="match status" value="1"/>
</dbReference>
<dbReference type="SUPFAM" id="SSF64268">
    <property type="entry name" value="PX domain"/>
    <property type="match status" value="1"/>
</dbReference>
<dbReference type="SUPFAM" id="SSF50044">
    <property type="entry name" value="SH3-domain"/>
    <property type="match status" value="1"/>
</dbReference>
<dbReference type="PROSITE" id="PS50195">
    <property type="entry name" value="PX"/>
    <property type="match status" value="1"/>
</dbReference>
<dbReference type="PROSITE" id="PS50002">
    <property type="entry name" value="SH3"/>
    <property type="match status" value="1"/>
</dbReference>
<comment type="function">
    <text evidence="1">Plays a role in the reorganization of the cytoskeleton, endocytosis and cellular vesicle trafficking, both during interphase and at the end of mitotic cell divisions. Required for efficient progress through mitosis and cytokinesis. Required for normal formation of the cleavage furrow at the end of mitosis. Modulates endocytosis of cell-surface proteins. Promotes membrane tubulation (in vitro). May promote the formation of macropinosomes (By similarity).</text>
</comment>
<comment type="subcellular location">
    <subcellularLocation>
        <location evidence="1">Cytoplasm</location>
        <location evidence="1">Cytosol</location>
    </subcellularLocation>
    <subcellularLocation>
        <location evidence="1">Membrane</location>
        <topology evidence="1">Peripheral membrane protein</topology>
        <orientation evidence="1">Cytoplasmic side</orientation>
    </subcellularLocation>
    <subcellularLocation>
        <location evidence="1">Cytoplasmic vesicle membrane</location>
        <topology evidence="1">Peripheral membrane protein</topology>
        <orientation evidence="1">Cytoplasmic side</orientation>
    </subcellularLocation>
    <text evidence="1">Primarily detected in the cytosol. A minor proportion is membrane-bound (By similarity).</text>
</comment>
<comment type="domain">
    <text evidence="1">The PX and BAR domains mediate association with membranes and are required for membrane tubulation.</text>
</comment>
<comment type="similarity">
    <text evidence="5">Belongs to the sorting nexin family.</text>
</comment>
<sequence length="550" mass="63323">MALKARALYSFQGENKEEINLMENEELQLLSDVSLDGWLQGTNSRGQTGLFPASYVEIQSSRSGSVQVDYSGNAREYTDPPHQGSYDDDDEEDDDDWDDWDDGQTVVDEPSGSNGVSRSELQHHHHYSRPEYSHRPRPALERQDSIASGKRGSVVGRNLNRFSSFVRSGVEAFVLGDVPQFGGVAESHAIEMAPKGPQWKANPRPFNCSVEEPTKQTKFKGIKSYISYRLTPDHSNSPVYRRYKHFDWLYNRLLHKFTVISLPHLPEKQATGRFEEDFIQKRKRRLVLWMDHMTSHPVLSQYDGFQHFLGCQDEKQWKAGKRRAERDELVGASFLLTLQLPTEHQDLQDVEERVDVFKAFSKKMDESVLQLSSVVSELARKHLGGFRKEFQKLGAAFQGLSHSFQLDPPYSSEPLVGAISHTGRTYEAVGEMFAEQPKNDQFRFLDTLSLYQGLLSNFPDIIHLQKGAFAKVKDSQRMSDEGRMEQDEADGVRKRCRVVGFALQAEINHFHQRRLLDFKQAIQHYLKEQIIFYRRVSQELEKTLHLYDEL</sequence>
<gene>
    <name type="primary">snx33</name>
    <name type="synonym">sh3px3</name>
</gene>
<accession>Q6NRL2</accession>
<evidence type="ECO:0000250" key="1"/>
<evidence type="ECO:0000255" key="2">
    <source>
        <dbReference type="PROSITE-ProRule" id="PRU00147"/>
    </source>
</evidence>
<evidence type="ECO:0000255" key="3">
    <source>
        <dbReference type="PROSITE-ProRule" id="PRU00192"/>
    </source>
</evidence>
<evidence type="ECO:0000256" key="4">
    <source>
        <dbReference type="SAM" id="MobiDB-lite"/>
    </source>
</evidence>
<evidence type="ECO:0000305" key="5"/>
<name>SNX33_XENLA</name>
<reference key="1">
    <citation type="submission" date="2004-05" db="EMBL/GenBank/DDBJ databases">
        <authorList>
            <consortium name="NIH - Xenopus Gene Collection (XGC) project"/>
        </authorList>
    </citation>
    <scope>NUCLEOTIDE SEQUENCE [LARGE SCALE MRNA]</scope>
    <source>
        <tissue>Oocyte</tissue>
    </source>
</reference>
<keyword id="KW-0131">Cell cycle</keyword>
<keyword id="KW-0132">Cell division</keyword>
<keyword id="KW-0963">Cytoplasm</keyword>
<keyword id="KW-0968">Cytoplasmic vesicle</keyword>
<keyword id="KW-0254">Endocytosis</keyword>
<keyword id="KW-0472">Membrane</keyword>
<keyword id="KW-0498">Mitosis</keyword>
<keyword id="KW-0653">Protein transport</keyword>
<keyword id="KW-1185">Reference proteome</keyword>
<keyword id="KW-0728">SH3 domain</keyword>
<keyword id="KW-0813">Transport</keyword>
<organism>
    <name type="scientific">Xenopus laevis</name>
    <name type="common">African clawed frog</name>
    <dbReference type="NCBI Taxonomy" id="8355"/>
    <lineage>
        <taxon>Eukaryota</taxon>
        <taxon>Metazoa</taxon>
        <taxon>Chordata</taxon>
        <taxon>Craniata</taxon>
        <taxon>Vertebrata</taxon>
        <taxon>Euteleostomi</taxon>
        <taxon>Amphibia</taxon>
        <taxon>Batrachia</taxon>
        <taxon>Anura</taxon>
        <taxon>Pipoidea</taxon>
        <taxon>Pipidae</taxon>
        <taxon>Xenopodinae</taxon>
        <taxon>Xenopus</taxon>
        <taxon>Xenopus</taxon>
    </lineage>
</organism>